<sequence>MNQNSDTTHGQALGSTLNHTTEVTRISNSSDHFEDSSSNVDESLDSSNPSSNEKASHTNEEYRSKGNQSYVPSSSNEPSPESSSNSDSSSSDDSSVDRLAGDPFELGENFNLKHYLRAYKDSLQRDDIITRSSGVCMRDHSVYGVGSGYEFLKTFPDIFLQPYRAITEKQVVEKAILSHCHALANAGELVMVLGQPGSGCSTFLRSVTSDTVHYKRVEGTTHYDGIDKADMKKFFPGDLLYSGENDVHFPSLTTAETLDFAAKCRTPNNRPCNLTRQEYVSRERHLIATAFGLTHTFNTKVGNDFVRGVSGGERKRVTISEGFATRPTIACWDNSTRGLDSSTAFEFVNVLRTCANELKMTSFVTAYQASEKIYKLFDRICVLYAGRQIYYGPADKAKQYFLDMGFDCHPRETTPDFLTAISDPKARFPRKGFENRVPRTPDEFEQMWRNSSVYADLMAEMESYDKRWTETTPASSEAPEKDNFGSDISATTKHELYRQSAVAEKSKRVKDTSPYTVTFSQQLWYCLARSWERYINDPAYIGSMAFAFLFQSLIIGSIFYDMKLNTVDVFSRGGVLFFSILFCALQSLSEIANMFSQRPIIAKHRASALYHPAADVISSLIVDLPFRFINISVFSIVLYFLTNLKRTAGGFWTYFLFLFIGATCMSAFFRSLAGIMPNVESASALGGIGVLAIAIYTGYAIPNIDVGWWFRWIAYLDPLQFGFESLMINEFKARQFECSQLIPYGSGYDNYPVANKICPVTSAEPGTDYVDGSTYLYISFNYKTRQLWRNLAIIIGYYAFLVFVNIVASETLNFNDLKGEYLVFRRGHAPDAVKAAVNEGGKPLDLETGQDTQGGDVVKESPDNEEELNKEYEGIEKGHDIFSWRNLNYDIQIKGEHRRLLNGVQGFVVPGKLTALMGESGAGKTTLLNVLAQRVDTGVVTGDMLVNGRGLDSTFQRRTGYVQQQDVHIGESTVREALRFSAALRQPASVPLSEKYEYVESVIKLLEMESYAEAIIGTPGSGLNVEQRKRATIGVELAAKPALLLFLDEPTSGLDSQSAWSIVCFLRKLADAGQAILCTIHQPSAVLFDQFDRLLLLQKGGKTVYFGDIGEHSKTLLNYFESHGAVHCPDDGNPAEYILDVIGAGATATTNRDWHEVWNNSEERKAISAELDKINASFSNSEDKKTLSKEDRSTYAMPLWFQVKMVMTRNFQSYWREPSILMSKLALDIFAGLFIGFTFYNQGLGVQNIQNKLFAVFMATVLAVPLINGLQPKFIELRNVFEVREKPSNIYSWVAFVFSAIIVEIPFNLVFGTLFFLCWFYPIKFYKHIHHPGDKTGYAWLLYMFFQMYFSTFGQAVASACPNAQTASVVNSLLFTFVITFNGVLQPNSNLVGFWHWMHSLTPFTYLIEGLLSDLVHGLPVECKSHEMLTINPPSGQTCGEYMSAFLTNNTAAGNLLNPNATTSCSYCPYQTADQFLERFSMRYTHRWRNLGIFVGYVFFNIFAVLLLFYVFRVMKLRSTWLGKKITGTG</sequence>
<gene>
    <name type="primary">bfr1</name>
    <name type="synonym">hba2</name>
    <name type="ORF">SPCC18B5.01c</name>
    <name type="ORF">SPCPJ732.04c</name>
</gene>
<dbReference type="EMBL" id="AB003671">
    <property type="protein sequence ID" value="BAA19929.1"/>
    <property type="molecule type" value="Genomic_DNA"/>
</dbReference>
<dbReference type="EMBL" id="X82891">
    <property type="protein sequence ID" value="CAA58062.1"/>
    <property type="molecule type" value="Genomic_DNA"/>
</dbReference>
<dbReference type="EMBL" id="S76267">
    <property type="protein sequence ID" value="AAB33744.1"/>
    <property type="molecule type" value="Genomic_DNA"/>
</dbReference>
<dbReference type="EMBL" id="CU329672">
    <property type="protein sequence ID" value="CAC34990.1"/>
    <property type="molecule type" value="Genomic_DNA"/>
</dbReference>
<dbReference type="PIR" id="S52239">
    <property type="entry name" value="S52239"/>
</dbReference>
<dbReference type="PIR" id="T52010">
    <property type="entry name" value="T52010"/>
</dbReference>
<dbReference type="RefSeq" id="NP_587932.3">
    <property type="nucleotide sequence ID" value="NM_001022923.3"/>
</dbReference>
<dbReference type="SMR" id="P41820"/>
<dbReference type="BioGRID" id="275766">
    <property type="interactions" value="9"/>
</dbReference>
<dbReference type="FunCoup" id="P41820">
    <property type="interactions" value="117"/>
</dbReference>
<dbReference type="STRING" id="284812.P41820"/>
<dbReference type="TCDB" id="3.A.1.205.11">
    <property type="family name" value="the atp-binding cassette (abc) superfamily"/>
</dbReference>
<dbReference type="GlyCosmos" id="P41820">
    <property type="glycosylation" value="9 sites, No reported glycans"/>
</dbReference>
<dbReference type="iPTMnet" id="P41820"/>
<dbReference type="PaxDb" id="4896-SPCC18B5.01c.1"/>
<dbReference type="EnsemblFungi" id="SPCC18B5.01c.1">
    <property type="protein sequence ID" value="SPCC18B5.01c.1:pep"/>
    <property type="gene ID" value="SPCC18B5.01c"/>
</dbReference>
<dbReference type="GeneID" id="2539195"/>
<dbReference type="KEGG" id="spo:2539195"/>
<dbReference type="PomBase" id="SPCC18B5.01c">
    <property type="gene designation" value="bfr1"/>
</dbReference>
<dbReference type="VEuPathDB" id="FungiDB:SPCC18B5.01c"/>
<dbReference type="eggNOG" id="KOG0061">
    <property type="taxonomic scope" value="Eukaryota"/>
</dbReference>
<dbReference type="eggNOG" id="KOG0065">
    <property type="taxonomic scope" value="Eukaryota"/>
</dbReference>
<dbReference type="HOGENOM" id="CLU_000604_35_0_1"/>
<dbReference type="InParanoid" id="P41820"/>
<dbReference type="OMA" id="AHWRDPT"/>
<dbReference type="PhylomeDB" id="P41820"/>
<dbReference type="PRO" id="PR:P41820"/>
<dbReference type="Proteomes" id="UP000002485">
    <property type="component" value="Chromosome III"/>
</dbReference>
<dbReference type="GO" id="GO:0005886">
    <property type="term" value="C:plasma membrane"/>
    <property type="evidence" value="ECO:0000314"/>
    <property type="project" value="PomBase"/>
</dbReference>
<dbReference type="GO" id="GO:0140359">
    <property type="term" value="F:ABC-type transporter activity"/>
    <property type="evidence" value="ECO:0007669"/>
    <property type="project" value="InterPro"/>
</dbReference>
<dbReference type="GO" id="GO:0005524">
    <property type="term" value="F:ATP binding"/>
    <property type="evidence" value="ECO:0007669"/>
    <property type="project" value="UniProtKB-KW"/>
</dbReference>
<dbReference type="GO" id="GO:0016887">
    <property type="term" value="F:ATP hydrolysis activity"/>
    <property type="evidence" value="ECO:0007669"/>
    <property type="project" value="InterPro"/>
</dbReference>
<dbReference type="GO" id="GO:0042626">
    <property type="term" value="F:ATPase-coupled transmembrane transporter activity"/>
    <property type="evidence" value="ECO:0000304"/>
    <property type="project" value="PomBase"/>
</dbReference>
<dbReference type="GO" id="GO:0046677">
    <property type="term" value="P:response to antibiotic"/>
    <property type="evidence" value="ECO:0007669"/>
    <property type="project" value="UniProtKB-KW"/>
</dbReference>
<dbReference type="GO" id="GO:1990961">
    <property type="term" value="P:xenobiotic detoxification by transmembrane export across the plasma membrane"/>
    <property type="evidence" value="ECO:0007669"/>
    <property type="project" value="InterPro"/>
</dbReference>
<dbReference type="CDD" id="cd03233">
    <property type="entry name" value="ABCG_PDR_domain1"/>
    <property type="match status" value="1"/>
</dbReference>
<dbReference type="CDD" id="cd03232">
    <property type="entry name" value="ABCG_PDR_domain2"/>
    <property type="match status" value="1"/>
</dbReference>
<dbReference type="FunFam" id="3.40.50.300:FF:000054">
    <property type="entry name" value="ABC multidrug transporter atrF"/>
    <property type="match status" value="1"/>
</dbReference>
<dbReference type="Gene3D" id="3.40.50.300">
    <property type="entry name" value="P-loop containing nucleotide triphosphate hydrolases"/>
    <property type="match status" value="2"/>
</dbReference>
<dbReference type="InterPro" id="IPR003593">
    <property type="entry name" value="AAA+_ATPase"/>
</dbReference>
<dbReference type="InterPro" id="IPR013525">
    <property type="entry name" value="ABC2_TM"/>
</dbReference>
<dbReference type="InterPro" id="IPR029481">
    <property type="entry name" value="ABC_trans_N"/>
</dbReference>
<dbReference type="InterPro" id="IPR003439">
    <property type="entry name" value="ABC_transporter-like_ATP-bd"/>
</dbReference>
<dbReference type="InterPro" id="IPR017871">
    <property type="entry name" value="ABC_transporter-like_CS"/>
</dbReference>
<dbReference type="InterPro" id="IPR043926">
    <property type="entry name" value="ABCG_dom"/>
</dbReference>
<dbReference type="InterPro" id="IPR034001">
    <property type="entry name" value="ABCG_PDR_1"/>
</dbReference>
<dbReference type="InterPro" id="IPR034003">
    <property type="entry name" value="ABCG_PDR_2"/>
</dbReference>
<dbReference type="InterPro" id="IPR005285">
    <property type="entry name" value="Drug-R_PDR/CDR"/>
</dbReference>
<dbReference type="InterPro" id="IPR027417">
    <property type="entry name" value="P-loop_NTPase"/>
</dbReference>
<dbReference type="InterPro" id="IPR010929">
    <property type="entry name" value="PDR_CDR_ABC"/>
</dbReference>
<dbReference type="NCBIfam" id="TIGR00956">
    <property type="entry name" value="3a01205"/>
    <property type="match status" value="1"/>
</dbReference>
<dbReference type="PANTHER" id="PTHR19241">
    <property type="entry name" value="ATP-BINDING CASSETTE TRANSPORTER"/>
    <property type="match status" value="1"/>
</dbReference>
<dbReference type="Pfam" id="PF01061">
    <property type="entry name" value="ABC2_membrane"/>
    <property type="match status" value="2"/>
</dbReference>
<dbReference type="Pfam" id="PF19055">
    <property type="entry name" value="ABC2_membrane_7"/>
    <property type="match status" value="1"/>
</dbReference>
<dbReference type="Pfam" id="PF00005">
    <property type="entry name" value="ABC_tran"/>
    <property type="match status" value="2"/>
</dbReference>
<dbReference type="Pfam" id="PF14510">
    <property type="entry name" value="ABC_trans_N"/>
    <property type="match status" value="1"/>
</dbReference>
<dbReference type="Pfam" id="PF06422">
    <property type="entry name" value="PDR_CDR"/>
    <property type="match status" value="2"/>
</dbReference>
<dbReference type="SMART" id="SM00382">
    <property type="entry name" value="AAA"/>
    <property type="match status" value="1"/>
</dbReference>
<dbReference type="SUPFAM" id="SSF52540">
    <property type="entry name" value="P-loop containing nucleoside triphosphate hydrolases"/>
    <property type="match status" value="2"/>
</dbReference>
<dbReference type="PROSITE" id="PS00211">
    <property type="entry name" value="ABC_TRANSPORTER_1"/>
    <property type="match status" value="1"/>
</dbReference>
<dbReference type="PROSITE" id="PS50893">
    <property type="entry name" value="ABC_TRANSPORTER_2"/>
    <property type="match status" value="2"/>
</dbReference>
<organism>
    <name type="scientific">Schizosaccharomyces pombe (strain 972 / ATCC 24843)</name>
    <name type="common">Fission yeast</name>
    <dbReference type="NCBI Taxonomy" id="284812"/>
    <lineage>
        <taxon>Eukaryota</taxon>
        <taxon>Fungi</taxon>
        <taxon>Dikarya</taxon>
        <taxon>Ascomycota</taxon>
        <taxon>Taphrinomycotina</taxon>
        <taxon>Schizosaccharomycetes</taxon>
        <taxon>Schizosaccharomycetales</taxon>
        <taxon>Schizosaccharomycetaceae</taxon>
        <taxon>Schizosaccharomyces</taxon>
    </lineage>
</organism>
<name>BFR1_SCHPO</name>
<proteinExistence type="evidence at protein level"/>
<accession>P41820</accession>
<accession>O00035</accession>
<accession>P87254</accession>
<accession>Q09194</accession>
<accession>Q9C0U4</accession>
<accession>Q9USL8</accession>
<comment type="function">
    <text>Confers hyper-resistance to brefeldin A (BFA), an inhibitor of intracellular protein transport. Could serve as an efflux pump of various antibiotics.</text>
</comment>
<comment type="subcellular location">
    <subcellularLocation>
        <location>Membrane</location>
        <topology>Multi-pass membrane protein</topology>
    </subcellularLocation>
</comment>
<comment type="similarity">
    <text evidence="5">Belongs to the ABC transporter superfamily. ABCG family. PDR (TC 3.A.1.205) subfamily.</text>
</comment>
<evidence type="ECO:0000255" key="1"/>
<evidence type="ECO:0000255" key="2">
    <source>
        <dbReference type="PROSITE-ProRule" id="PRU00434"/>
    </source>
</evidence>
<evidence type="ECO:0000256" key="3">
    <source>
        <dbReference type="SAM" id="MobiDB-lite"/>
    </source>
</evidence>
<evidence type="ECO:0000269" key="4">
    <source>
    </source>
</evidence>
<evidence type="ECO:0000305" key="5"/>
<protein>
    <recommendedName>
        <fullName>Brefeldin A resistance protein</fullName>
    </recommendedName>
</protein>
<keyword id="KW-0046">Antibiotic resistance</keyword>
<keyword id="KW-0067">ATP-binding</keyword>
<keyword id="KW-0325">Glycoprotein</keyword>
<keyword id="KW-0472">Membrane</keyword>
<keyword id="KW-0547">Nucleotide-binding</keyword>
<keyword id="KW-0597">Phosphoprotein</keyword>
<keyword id="KW-1185">Reference proteome</keyword>
<keyword id="KW-0677">Repeat</keyword>
<keyword id="KW-0812">Transmembrane</keyword>
<keyword id="KW-1133">Transmembrane helix</keyword>
<keyword id="KW-0813">Transport</keyword>
<feature type="chain" id="PRO_0000093451" description="Brefeldin A resistance protein">
    <location>
        <begin position="1"/>
        <end position="1530"/>
    </location>
</feature>
<feature type="transmembrane region" description="Helical" evidence="1">
    <location>
        <begin position="539"/>
        <end position="559"/>
    </location>
</feature>
<feature type="transmembrane region" description="Helical" evidence="1">
    <location>
        <begin position="575"/>
        <end position="595"/>
    </location>
</feature>
<feature type="transmembrane region" description="Helical" evidence="1">
    <location>
        <begin position="620"/>
        <end position="640"/>
    </location>
</feature>
<feature type="transmembrane region" description="Helical" evidence="1">
    <location>
        <begin position="649"/>
        <end position="669"/>
    </location>
</feature>
<feature type="transmembrane region" description="Helical" evidence="1">
    <location>
        <begin position="684"/>
        <end position="704"/>
    </location>
</feature>
<feature type="transmembrane region" description="Helical" evidence="1">
    <location>
        <begin position="791"/>
        <end position="811"/>
    </location>
</feature>
<feature type="transmembrane region" description="Helical" evidence="1">
    <location>
        <begin position="1220"/>
        <end position="1240"/>
    </location>
</feature>
<feature type="transmembrane region" description="Helical" evidence="1">
    <location>
        <begin position="1255"/>
        <end position="1275"/>
    </location>
</feature>
<feature type="transmembrane region" description="Helical" evidence="1">
    <location>
        <begin position="1300"/>
        <end position="1320"/>
    </location>
</feature>
<feature type="transmembrane region" description="Helical" evidence="1">
    <location>
        <begin position="1338"/>
        <end position="1358"/>
    </location>
</feature>
<feature type="transmembrane region" description="Helical" evidence="1">
    <location>
        <begin position="1367"/>
        <end position="1387"/>
    </location>
</feature>
<feature type="transmembrane region" description="Helical" evidence="1">
    <location>
        <begin position="1392"/>
        <end position="1412"/>
    </location>
</feature>
<feature type="transmembrane region" description="Helical" evidence="1">
    <location>
        <begin position="1492"/>
        <end position="1512"/>
    </location>
</feature>
<feature type="domain" description="ABC transporter 1" evidence="2">
    <location>
        <begin position="153"/>
        <end position="410"/>
    </location>
</feature>
<feature type="domain" description="ABC transporter 2" evidence="2">
    <location>
        <begin position="882"/>
        <end position="1125"/>
    </location>
</feature>
<feature type="region of interest" description="Disordered" evidence="3">
    <location>
        <begin position="1"/>
        <end position="100"/>
    </location>
</feature>
<feature type="region of interest" description="Disordered" evidence="3">
    <location>
        <begin position="843"/>
        <end position="864"/>
    </location>
</feature>
<feature type="compositionally biased region" description="Polar residues" evidence="3">
    <location>
        <begin position="1"/>
        <end position="26"/>
    </location>
</feature>
<feature type="compositionally biased region" description="Low complexity" evidence="3">
    <location>
        <begin position="36"/>
        <end position="48"/>
    </location>
</feature>
<feature type="compositionally biased region" description="Basic and acidic residues" evidence="3">
    <location>
        <begin position="54"/>
        <end position="64"/>
    </location>
</feature>
<feature type="compositionally biased region" description="Low complexity" evidence="3">
    <location>
        <begin position="72"/>
        <end position="93"/>
    </location>
</feature>
<feature type="binding site" evidence="2">
    <location>
        <begin position="918"/>
        <end position="925"/>
    </location>
    <ligand>
        <name>ATP</name>
        <dbReference type="ChEBI" id="CHEBI:30616"/>
    </ligand>
</feature>
<feature type="modified residue" description="Phosphoserine" evidence="4">
    <location>
        <position position="486"/>
    </location>
</feature>
<feature type="modified residue" description="Phosphoserine" evidence="4">
    <location>
        <position position="489"/>
    </location>
</feature>
<feature type="modified residue" description="Phosphothreonine" evidence="4">
    <location>
        <position position="491"/>
    </location>
</feature>
<feature type="modified residue" description="Phosphothreonine" evidence="4">
    <location>
        <position position="1186"/>
    </location>
</feature>
<feature type="glycosylation site" description="N-linked (GlcNAc...) asparagine" evidence="1">
    <location>
        <position position="28"/>
    </location>
</feature>
<feature type="glycosylation site" description="N-linked (GlcNAc...) asparagine" evidence="1">
    <location>
        <position position="67"/>
    </location>
</feature>
<feature type="glycosylation site" description="N-linked (GlcNAc...) asparagine" evidence="1">
    <location>
        <position position="273"/>
    </location>
</feature>
<feature type="glycosylation site" description="N-linked (GlcNAc...) asparagine" evidence="1">
    <location>
        <position position="334"/>
    </location>
</feature>
<feature type="glycosylation site" description="N-linked (GlcNAc...) asparagine" evidence="1">
    <location>
        <position position="450"/>
    </location>
</feature>
<feature type="glycosylation site" description="N-linked (GlcNAc...) asparagine" evidence="1">
    <location>
        <position position="1159"/>
    </location>
</feature>
<feature type="glycosylation site" description="N-linked (GlcNAc...) asparagine" evidence="1">
    <location>
        <position position="1175"/>
    </location>
</feature>
<feature type="glycosylation site" description="N-linked (GlcNAc...) asparagine" evidence="1">
    <location>
        <position position="1449"/>
    </location>
</feature>
<feature type="glycosylation site" description="N-linked (GlcNAc...) asparagine" evidence="1">
    <location>
        <position position="1460"/>
    </location>
</feature>
<feature type="sequence conflict" description="In Ref. 1; BAA19929/AAB33744." evidence="5" ref="1">
    <original>N</original>
    <variation>H</variation>
    <location>
        <position position="245"/>
    </location>
</feature>
<feature type="sequence conflict" description="In Ref. 1; AAB33744." evidence="5" ref="1">
    <original>A</original>
    <variation>D</variation>
    <location>
        <position position="478"/>
    </location>
</feature>
<feature type="sequence conflict" description="In Ref. 1; AAB33744." evidence="5" ref="1">
    <original>P</original>
    <variation>A</variation>
    <location>
        <position position="830"/>
    </location>
</feature>
<feature type="sequence conflict" description="In Ref. 1; BAA19929/AAB33744." evidence="5" ref="1">
    <original>E</original>
    <variation>G</variation>
    <location>
        <position position="997"/>
    </location>
</feature>
<feature type="sequence conflict" description="In Ref. 1; AAB33744." evidence="5" ref="1">
    <original>W</original>
    <variation>C</variation>
    <location>
        <position position="1060"/>
    </location>
</feature>
<feature type="sequence conflict" description="In Ref. 1; AAB33744." evidence="5" ref="1">
    <original>A</original>
    <variation>E</variation>
    <location>
        <position position="1075"/>
    </location>
</feature>
<feature type="sequence conflict" description="In Ref. 1; AAB33744." evidence="5" ref="1">
    <original>T</original>
    <variation>P</variation>
    <location>
        <position position="1079"/>
    </location>
</feature>
<reference key="1">
    <citation type="journal article" date="1995" name="J. Bacteriol.">
        <title>bfr1+, a novel gene of Schizosaccharomyces pombe which confers brefeldin A resistance, is structurally related to the ATP-binding cassette superfamily.</title>
        <authorList>
            <person name="Nagao K."/>
            <person name="Taguchi Y."/>
            <person name="Arioka M."/>
            <person name="Kadokura H."/>
            <person name="Takatsuki A."/>
            <person name="Yoda K."/>
            <person name="Yamasaki M."/>
        </authorList>
    </citation>
    <scope>NUCLEOTIDE SEQUENCE [GENOMIC DNA]</scope>
</reference>
<reference key="2">
    <citation type="journal article" date="1995" name="Biochem. Biophys. Res. Commun.">
        <title>Characterization of a novel Schizosaccharomyces pombe multidrug resistance transporter conferring brefeldin A resistance.</title>
        <authorList>
            <person name="Turi T.G."/>
            <person name="Rose J.K."/>
        </authorList>
    </citation>
    <scope>NUCLEOTIDE SEQUENCE [GENOMIC DNA]</scope>
    <source>
        <strain>BAP1</strain>
    </source>
</reference>
<reference key="3">
    <citation type="journal article" date="2002" name="Nature">
        <title>The genome sequence of Schizosaccharomyces pombe.</title>
        <authorList>
            <person name="Wood V."/>
            <person name="Gwilliam R."/>
            <person name="Rajandream M.A."/>
            <person name="Lyne M.H."/>
            <person name="Lyne R."/>
            <person name="Stewart A."/>
            <person name="Sgouros J.G."/>
            <person name="Peat N."/>
            <person name="Hayles J."/>
            <person name="Baker S.G."/>
            <person name="Basham D."/>
            <person name="Bowman S."/>
            <person name="Brooks K."/>
            <person name="Brown D."/>
            <person name="Brown S."/>
            <person name="Chillingworth T."/>
            <person name="Churcher C.M."/>
            <person name="Collins M."/>
            <person name="Connor R."/>
            <person name="Cronin A."/>
            <person name="Davis P."/>
            <person name="Feltwell T."/>
            <person name="Fraser A."/>
            <person name="Gentles S."/>
            <person name="Goble A."/>
            <person name="Hamlin N."/>
            <person name="Harris D.E."/>
            <person name="Hidalgo J."/>
            <person name="Hodgson G."/>
            <person name="Holroyd S."/>
            <person name="Hornsby T."/>
            <person name="Howarth S."/>
            <person name="Huckle E.J."/>
            <person name="Hunt S."/>
            <person name="Jagels K."/>
            <person name="James K.D."/>
            <person name="Jones L."/>
            <person name="Jones M."/>
            <person name="Leather S."/>
            <person name="McDonald S."/>
            <person name="McLean J."/>
            <person name="Mooney P."/>
            <person name="Moule S."/>
            <person name="Mungall K.L."/>
            <person name="Murphy L.D."/>
            <person name="Niblett D."/>
            <person name="Odell C."/>
            <person name="Oliver K."/>
            <person name="O'Neil S."/>
            <person name="Pearson D."/>
            <person name="Quail M.A."/>
            <person name="Rabbinowitsch E."/>
            <person name="Rutherford K.M."/>
            <person name="Rutter S."/>
            <person name="Saunders D."/>
            <person name="Seeger K."/>
            <person name="Sharp S."/>
            <person name="Skelton J."/>
            <person name="Simmonds M.N."/>
            <person name="Squares R."/>
            <person name="Squares S."/>
            <person name="Stevens K."/>
            <person name="Taylor K."/>
            <person name="Taylor R.G."/>
            <person name="Tivey A."/>
            <person name="Walsh S.V."/>
            <person name="Warren T."/>
            <person name="Whitehead S."/>
            <person name="Woodward J.R."/>
            <person name="Volckaert G."/>
            <person name="Aert R."/>
            <person name="Robben J."/>
            <person name="Grymonprez B."/>
            <person name="Weltjens I."/>
            <person name="Vanstreels E."/>
            <person name="Rieger M."/>
            <person name="Schaefer M."/>
            <person name="Mueller-Auer S."/>
            <person name="Gabel C."/>
            <person name="Fuchs M."/>
            <person name="Duesterhoeft A."/>
            <person name="Fritzc C."/>
            <person name="Holzer E."/>
            <person name="Moestl D."/>
            <person name="Hilbert H."/>
            <person name="Borzym K."/>
            <person name="Langer I."/>
            <person name="Beck A."/>
            <person name="Lehrach H."/>
            <person name="Reinhardt R."/>
            <person name="Pohl T.M."/>
            <person name="Eger P."/>
            <person name="Zimmermann W."/>
            <person name="Wedler H."/>
            <person name="Wambutt R."/>
            <person name="Purnelle B."/>
            <person name="Goffeau A."/>
            <person name="Cadieu E."/>
            <person name="Dreano S."/>
            <person name="Gloux S."/>
            <person name="Lelaure V."/>
            <person name="Mottier S."/>
            <person name="Galibert F."/>
            <person name="Aves S.J."/>
            <person name="Xiang Z."/>
            <person name="Hunt C."/>
            <person name="Moore K."/>
            <person name="Hurst S.M."/>
            <person name="Lucas M."/>
            <person name="Rochet M."/>
            <person name="Gaillardin C."/>
            <person name="Tallada V.A."/>
            <person name="Garzon A."/>
            <person name="Thode G."/>
            <person name="Daga R.R."/>
            <person name="Cruzado L."/>
            <person name="Jimenez J."/>
            <person name="Sanchez M."/>
            <person name="del Rey F."/>
            <person name="Benito J."/>
            <person name="Dominguez A."/>
            <person name="Revuelta J.L."/>
            <person name="Moreno S."/>
            <person name="Armstrong J."/>
            <person name="Forsburg S.L."/>
            <person name="Cerutti L."/>
            <person name="Lowe T."/>
            <person name="McCombie W.R."/>
            <person name="Paulsen I."/>
            <person name="Potashkin J."/>
            <person name="Shpakovski G.V."/>
            <person name="Ussery D."/>
            <person name="Barrell B.G."/>
            <person name="Nurse P."/>
        </authorList>
    </citation>
    <scope>NUCLEOTIDE SEQUENCE [LARGE SCALE GENOMIC DNA]</scope>
    <source>
        <strain>972 / ATCC 24843</strain>
    </source>
</reference>
<reference key="4">
    <citation type="journal article" date="2008" name="J. Proteome Res.">
        <title>Phosphoproteome analysis of fission yeast.</title>
        <authorList>
            <person name="Wilson-Grady J.T."/>
            <person name="Villen J."/>
            <person name="Gygi S.P."/>
        </authorList>
    </citation>
    <scope>PHOSPHORYLATION [LARGE SCALE ANALYSIS] AT SER-486; SER-489; THR-491 AND THR-1186</scope>
    <scope>IDENTIFICATION BY MASS SPECTROMETRY</scope>
</reference>